<sequence length="634" mass="70618">MKGIKKSPTEESLYLEYSHQTEGCIFPLHTSVTLFLLSYCECKVFNVCLVLTEESTDTSDTSFLKEALPQDLEIQVISKQALPPIVQNCCLPAVVDQPDVFCRAGLAVVLRHIIQKSYEAEPSRKEILELLGFKKTCLKACAEVSQWTRLCELTIPLAVENFLQESSEHPPTIPEEILELERKLSEPVRVHNDDKLRRQKLKQQKAAGSEPPSGKGKAKSKASAQKTPKDLAAPSKSLELKVAFSKLTVQEDAAASNREPSHIRKAKAADLPPLEHVFAEGLYFTLADIVLLPCIHHFLVIICKKFSEKLEQFPLLTSWYQRIQEVPKVKTAASKCGIYFLYLPELLNSARKQPVNSDEVAAVDEQSDPLFIGGPRPTMTKLMEKGIEAMFSPHPCPAWTLDWSSLPAAVSPKEGKMSTDRALRKQQQLNNLVYLVLNQAKPGDRIVDFCSGGGHVGIVLAHMLPSCQVTLIENKELSLIRAKKRSDELGLSNIWFIQANMEYFTGMFNIGVALHACGVATDMVIEHCIQTRASFITCPCCYGFIQNTSKFNFPKSEKFKKTLSYKEHMLLCRFADQTAVQLPPERRLIGKQCMGLVDLDRAAAAGEHGYSVQVISMEPESCSPKNNMIVGVPL</sequence>
<dbReference type="EMBL" id="AK037169">
    <property type="protein sequence ID" value="BAC29731.1"/>
    <property type="molecule type" value="mRNA"/>
</dbReference>
<dbReference type="EMBL" id="AK013967">
    <property type="protein sequence ID" value="BAB29091.1"/>
    <property type="molecule type" value="mRNA"/>
</dbReference>
<dbReference type="EMBL" id="AK017059">
    <property type="protein sequence ID" value="BAB30574.2"/>
    <property type="molecule type" value="mRNA"/>
</dbReference>
<dbReference type="EMBL" id="AK020021">
    <property type="protein sequence ID" value="BAB31969.1"/>
    <property type="molecule type" value="mRNA"/>
</dbReference>
<dbReference type="EMBL" id="AK044441">
    <property type="protein sequence ID" value="BAC31921.1"/>
    <property type="molecule type" value="mRNA"/>
</dbReference>
<dbReference type="EMBL" id="BC047136">
    <property type="protein sequence ID" value="AAH47136.1"/>
    <property type="molecule type" value="mRNA"/>
</dbReference>
<dbReference type="EMBL" id="BC061240">
    <property type="protein sequence ID" value="AAH61240.1"/>
    <property type="molecule type" value="mRNA"/>
</dbReference>
<dbReference type="CCDS" id="CCDS17847.1">
    <molecule id="Q5RL51-1"/>
</dbReference>
<dbReference type="RefSeq" id="NP_001343238.1">
    <molecule id="Q5RL51-1"/>
    <property type="nucleotide sequence ID" value="NM_001356309.1"/>
</dbReference>
<dbReference type="RefSeq" id="NP_080507.2">
    <molecule id="Q5RL51-1"/>
    <property type="nucleotide sequence ID" value="NM_026231.3"/>
</dbReference>
<dbReference type="RefSeq" id="XP_006502001.1">
    <property type="nucleotide sequence ID" value="XM_006501938.3"/>
</dbReference>
<dbReference type="FunCoup" id="Q5RL51">
    <property type="interactions" value="2970"/>
</dbReference>
<dbReference type="IntAct" id="Q5RL51">
    <property type="interactions" value="1"/>
</dbReference>
<dbReference type="MINT" id="Q5RL51"/>
<dbReference type="STRING" id="10090.ENSMUSP00000029651"/>
<dbReference type="GlyGen" id="Q5RL51">
    <property type="glycosylation" value="1 site, 1 O-linked glycan (1 site)"/>
</dbReference>
<dbReference type="iPTMnet" id="Q5RL51"/>
<dbReference type="PhosphoSitePlus" id="Q5RL51"/>
<dbReference type="PaxDb" id="10090-ENSMUSP00000029651"/>
<dbReference type="PeptideAtlas" id="Q5RL51"/>
<dbReference type="ProteomicsDB" id="271476">
    <molecule id="Q5RL51-1"/>
</dbReference>
<dbReference type="ProteomicsDB" id="271477">
    <molecule id="Q5RL51-2"/>
</dbReference>
<dbReference type="ProteomicsDB" id="271478">
    <molecule id="Q5RL51-3"/>
</dbReference>
<dbReference type="ProteomicsDB" id="271479">
    <molecule id="Q5RL51-4"/>
</dbReference>
<dbReference type="Pumba" id="Q5RL51"/>
<dbReference type="Antibodypedia" id="26176">
    <property type="antibodies" value="97 antibodies from 21 providers"/>
</dbReference>
<dbReference type="DNASU" id="67553"/>
<dbReference type="Ensembl" id="ENSMUST00000029651.11">
    <molecule id="Q5RL51-1"/>
    <property type="protein sequence ID" value="ENSMUSP00000029651.5"/>
    <property type="gene ID" value="ENSMUSG00000028018.16"/>
</dbReference>
<dbReference type="Ensembl" id="ENSMUST00000080583.6">
    <molecule id="Q5RL51-1"/>
    <property type="protein sequence ID" value="ENSMUSP00000079421.6"/>
    <property type="gene ID" value="ENSMUSG00000028018.16"/>
</dbReference>
<dbReference type="GeneID" id="67553"/>
<dbReference type="KEGG" id="mmu:67553"/>
<dbReference type="UCSC" id="uc008rkg.1">
    <molecule id="Q5RL51-1"/>
    <property type="organism name" value="mouse"/>
</dbReference>
<dbReference type="UCSC" id="uc008rki.1">
    <molecule id="Q5RL51-4"/>
    <property type="organism name" value="mouse"/>
</dbReference>
<dbReference type="UCSC" id="uc012cxx.1">
    <molecule id="Q5RL51-2"/>
    <property type="organism name" value="mouse"/>
</dbReference>
<dbReference type="AGR" id="MGI:1914803"/>
<dbReference type="CTD" id="79807"/>
<dbReference type="MGI" id="MGI:1914803">
    <property type="gene designation" value="Gstcd"/>
</dbReference>
<dbReference type="VEuPathDB" id="HostDB:ENSMUSG00000028018"/>
<dbReference type="eggNOG" id="ENOG502QUFE">
    <property type="taxonomic scope" value="Eukaryota"/>
</dbReference>
<dbReference type="GeneTree" id="ENSGT00390000004446"/>
<dbReference type="HOGENOM" id="CLU_013673_1_0_1"/>
<dbReference type="InParanoid" id="Q5RL51"/>
<dbReference type="OMA" id="WTRFCEV"/>
<dbReference type="OrthoDB" id="206598at2759"/>
<dbReference type="PhylomeDB" id="Q5RL51"/>
<dbReference type="TreeFam" id="TF324238"/>
<dbReference type="BioGRID-ORCS" id="67553">
    <property type="hits" value="0 hits in 76 CRISPR screens"/>
</dbReference>
<dbReference type="ChiTaRS" id="Gstcd">
    <property type="organism name" value="mouse"/>
</dbReference>
<dbReference type="PRO" id="PR:Q5RL51"/>
<dbReference type="Proteomes" id="UP000000589">
    <property type="component" value="Chromosome 3"/>
</dbReference>
<dbReference type="RNAct" id="Q5RL51">
    <property type="molecule type" value="protein"/>
</dbReference>
<dbReference type="Bgee" id="ENSMUSG00000028018">
    <property type="expression patterns" value="Expressed in manus and 205 other cell types or tissues"/>
</dbReference>
<dbReference type="GO" id="GO:0005737">
    <property type="term" value="C:cytoplasm"/>
    <property type="evidence" value="ECO:0000250"/>
    <property type="project" value="UniProtKB"/>
</dbReference>
<dbReference type="GO" id="GO:0060541">
    <property type="term" value="P:respiratory system development"/>
    <property type="evidence" value="ECO:0000315"/>
    <property type="project" value="MGI"/>
</dbReference>
<dbReference type="GO" id="GO:0032496">
    <property type="term" value="P:response to lipopolysaccharide"/>
    <property type="evidence" value="ECO:0000315"/>
    <property type="project" value="MGI"/>
</dbReference>
<dbReference type="CDD" id="cd00299">
    <property type="entry name" value="GST_C_family"/>
    <property type="match status" value="1"/>
</dbReference>
<dbReference type="FunFam" id="3.40.50.150:FF:000125">
    <property type="entry name" value="Glutathione S-transferase C-terminal domain-containing protein"/>
    <property type="match status" value="1"/>
</dbReference>
<dbReference type="FunFam" id="1.20.1050.10:FF:000143">
    <property type="entry name" value="Glutathione S-transferase, C-terminal domain-containing"/>
    <property type="match status" value="1"/>
</dbReference>
<dbReference type="Gene3D" id="1.20.1050.10">
    <property type="match status" value="1"/>
</dbReference>
<dbReference type="Gene3D" id="3.40.50.150">
    <property type="entry name" value="Vaccinia Virus protein VP39"/>
    <property type="match status" value="1"/>
</dbReference>
<dbReference type="InterPro" id="IPR010987">
    <property type="entry name" value="Glutathione-S-Trfase_C-like"/>
</dbReference>
<dbReference type="InterPro" id="IPR036282">
    <property type="entry name" value="Glutathione-S-Trfase_C_sf"/>
</dbReference>
<dbReference type="InterPro" id="IPR004046">
    <property type="entry name" value="GST_C"/>
</dbReference>
<dbReference type="InterPro" id="IPR025714">
    <property type="entry name" value="Methyltranfer_dom"/>
</dbReference>
<dbReference type="InterPro" id="IPR029063">
    <property type="entry name" value="SAM-dependent_MTases_sf"/>
</dbReference>
<dbReference type="PANTHER" id="PTHR13369">
    <property type="match status" value="1"/>
</dbReference>
<dbReference type="PANTHER" id="PTHR13369:SF0">
    <property type="entry name" value="GLUTATHIONE S-TRANSFERASE C-TERMINAL DOMAIN-CONTAINING PROTEIN"/>
    <property type="match status" value="1"/>
</dbReference>
<dbReference type="Pfam" id="PF14497">
    <property type="entry name" value="GST_C_3"/>
    <property type="match status" value="1"/>
</dbReference>
<dbReference type="Pfam" id="PF13679">
    <property type="entry name" value="Methyltransf_32"/>
    <property type="match status" value="1"/>
</dbReference>
<dbReference type="SUPFAM" id="SSF47616">
    <property type="entry name" value="GST C-terminal domain-like"/>
    <property type="match status" value="1"/>
</dbReference>
<dbReference type="SUPFAM" id="SSF53335">
    <property type="entry name" value="S-adenosyl-L-methionine-dependent methyltransferases"/>
    <property type="match status" value="1"/>
</dbReference>
<dbReference type="PROSITE" id="PS50405">
    <property type="entry name" value="GST_CTER"/>
    <property type="match status" value="1"/>
</dbReference>
<gene>
    <name type="primary">Gstcd</name>
</gene>
<name>GSTCD_MOUSE</name>
<accession>Q5RL51</accession>
<accession>Q6P8I1</accession>
<accession>Q8BXR2</accession>
<accession>Q8BYY6</accession>
<accession>Q9CTV2</accession>
<accession>Q9CUA9</accession>
<accession>Q9CXU7</accession>
<evidence type="ECO:0000250" key="1">
    <source>
        <dbReference type="UniProtKB" id="Q8NEC7"/>
    </source>
</evidence>
<evidence type="ECO:0000256" key="2">
    <source>
        <dbReference type="SAM" id="MobiDB-lite"/>
    </source>
</evidence>
<evidence type="ECO:0000303" key="3">
    <source>
    </source>
</evidence>
<evidence type="ECO:0000305" key="4"/>
<protein>
    <recommendedName>
        <fullName>Glutathione S-transferase C-terminal domain-containing protein</fullName>
    </recommendedName>
</protein>
<keyword id="KW-0025">Alternative splicing</keyword>
<keyword id="KW-0963">Cytoplasm</keyword>
<keyword id="KW-1185">Reference proteome</keyword>
<proteinExistence type="evidence at transcript level"/>
<reference key="1">
    <citation type="journal article" date="2005" name="Science">
        <title>The transcriptional landscape of the mammalian genome.</title>
        <authorList>
            <person name="Carninci P."/>
            <person name="Kasukawa T."/>
            <person name="Katayama S."/>
            <person name="Gough J."/>
            <person name="Frith M.C."/>
            <person name="Maeda N."/>
            <person name="Oyama R."/>
            <person name="Ravasi T."/>
            <person name="Lenhard B."/>
            <person name="Wells C."/>
            <person name="Kodzius R."/>
            <person name="Shimokawa K."/>
            <person name="Bajic V.B."/>
            <person name="Brenner S.E."/>
            <person name="Batalov S."/>
            <person name="Forrest A.R."/>
            <person name="Zavolan M."/>
            <person name="Davis M.J."/>
            <person name="Wilming L.G."/>
            <person name="Aidinis V."/>
            <person name="Allen J.E."/>
            <person name="Ambesi-Impiombato A."/>
            <person name="Apweiler R."/>
            <person name="Aturaliya R.N."/>
            <person name="Bailey T.L."/>
            <person name="Bansal M."/>
            <person name="Baxter L."/>
            <person name="Beisel K.W."/>
            <person name="Bersano T."/>
            <person name="Bono H."/>
            <person name="Chalk A.M."/>
            <person name="Chiu K.P."/>
            <person name="Choudhary V."/>
            <person name="Christoffels A."/>
            <person name="Clutterbuck D.R."/>
            <person name="Crowe M.L."/>
            <person name="Dalla E."/>
            <person name="Dalrymple B.P."/>
            <person name="de Bono B."/>
            <person name="Della Gatta G."/>
            <person name="di Bernardo D."/>
            <person name="Down T."/>
            <person name="Engstrom P."/>
            <person name="Fagiolini M."/>
            <person name="Faulkner G."/>
            <person name="Fletcher C.F."/>
            <person name="Fukushima T."/>
            <person name="Furuno M."/>
            <person name="Futaki S."/>
            <person name="Gariboldi M."/>
            <person name="Georgii-Hemming P."/>
            <person name="Gingeras T.R."/>
            <person name="Gojobori T."/>
            <person name="Green R.E."/>
            <person name="Gustincich S."/>
            <person name="Harbers M."/>
            <person name="Hayashi Y."/>
            <person name="Hensch T.K."/>
            <person name="Hirokawa N."/>
            <person name="Hill D."/>
            <person name="Huminiecki L."/>
            <person name="Iacono M."/>
            <person name="Ikeo K."/>
            <person name="Iwama A."/>
            <person name="Ishikawa T."/>
            <person name="Jakt M."/>
            <person name="Kanapin A."/>
            <person name="Katoh M."/>
            <person name="Kawasawa Y."/>
            <person name="Kelso J."/>
            <person name="Kitamura H."/>
            <person name="Kitano H."/>
            <person name="Kollias G."/>
            <person name="Krishnan S.P."/>
            <person name="Kruger A."/>
            <person name="Kummerfeld S.K."/>
            <person name="Kurochkin I.V."/>
            <person name="Lareau L.F."/>
            <person name="Lazarevic D."/>
            <person name="Lipovich L."/>
            <person name="Liu J."/>
            <person name="Liuni S."/>
            <person name="McWilliam S."/>
            <person name="Madan Babu M."/>
            <person name="Madera M."/>
            <person name="Marchionni L."/>
            <person name="Matsuda H."/>
            <person name="Matsuzawa S."/>
            <person name="Miki H."/>
            <person name="Mignone F."/>
            <person name="Miyake S."/>
            <person name="Morris K."/>
            <person name="Mottagui-Tabar S."/>
            <person name="Mulder N."/>
            <person name="Nakano N."/>
            <person name="Nakauchi H."/>
            <person name="Ng P."/>
            <person name="Nilsson R."/>
            <person name="Nishiguchi S."/>
            <person name="Nishikawa S."/>
            <person name="Nori F."/>
            <person name="Ohara O."/>
            <person name="Okazaki Y."/>
            <person name="Orlando V."/>
            <person name="Pang K.C."/>
            <person name="Pavan W.J."/>
            <person name="Pavesi G."/>
            <person name="Pesole G."/>
            <person name="Petrovsky N."/>
            <person name="Piazza S."/>
            <person name="Reed J."/>
            <person name="Reid J.F."/>
            <person name="Ring B.Z."/>
            <person name="Ringwald M."/>
            <person name="Rost B."/>
            <person name="Ruan Y."/>
            <person name="Salzberg S.L."/>
            <person name="Sandelin A."/>
            <person name="Schneider C."/>
            <person name="Schoenbach C."/>
            <person name="Sekiguchi K."/>
            <person name="Semple C.A."/>
            <person name="Seno S."/>
            <person name="Sessa L."/>
            <person name="Sheng Y."/>
            <person name="Shibata Y."/>
            <person name="Shimada H."/>
            <person name="Shimada K."/>
            <person name="Silva D."/>
            <person name="Sinclair B."/>
            <person name="Sperling S."/>
            <person name="Stupka E."/>
            <person name="Sugiura K."/>
            <person name="Sultana R."/>
            <person name="Takenaka Y."/>
            <person name="Taki K."/>
            <person name="Tammoja K."/>
            <person name="Tan S.L."/>
            <person name="Tang S."/>
            <person name="Taylor M.S."/>
            <person name="Tegner J."/>
            <person name="Teichmann S.A."/>
            <person name="Ueda H.R."/>
            <person name="van Nimwegen E."/>
            <person name="Verardo R."/>
            <person name="Wei C.L."/>
            <person name="Yagi K."/>
            <person name="Yamanishi H."/>
            <person name="Zabarovsky E."/>
            <person name="Zhu S."/>
            <person name="Zimmer A."/>
            <person name="Hide W."/>
            <person name="Bult C."/>
            <person name="Grimmond S.M."/>
            <person name="Teasdale R.D."/>
            <person name="Liu E.T."/>
            <person name="Brusic V."/>
            <person name="Quackenbush J."/>
            <person name="Wahlestedt C."/>
            <person name="Mattick J.S."/>
            <person name="Hume D.A."/>
            <person name="Kai C."/>
            <person name="Sasaki D."/>
            <person name="Tomaru Y."/>
            <person name="Fukuda S."/>
            <person name="Kanamori-Katayama M."/>
            <person name="Suzuki M."/>
            <person name="Aoki J."/>
            <person name="Arakawa T."/>
            <person name="Iida J."/>
            <person name="Imamura K."/>
            <person name="Itoh M."/>
            <person name="Kato T."/>
            <person name="Kawaji H."/>
            <person name="Kawagashira N."/>
            <person name="Kawashima T."/>
            <person name="Kojima M."/>
            <person name="Kondo S."/>
            <person name="Konno H."/>
            <person name="Nakano K."/>
            <person name="Ninomiya N."/>
            <person name="Nishio T."/>
            <person name="Okada M."/>
            <person name="Plessy C."/>
            <person name="Shibata K."/>
            <person name="Shiraki T."/>
            <person name="Suzuki S."/>
            <person name="Tagami M."/>
            <person name="Waki K."/>
            <person name="Watahiki A."/>
            <person name="Okamura-Oho Y."/>
            <person name="Suzuki H."/>
            <person name="Kawai J."/>
            <person name="Hayashizaki Y."/>
        </authorList>
    </citation>
    <scope>NUCLEOTIDE SEQUENCE [LARGE SCALE MRNA] (ISOFORMS 2; 3 AND 4)</scope>
    <scope>NUCLEOTIDE SEQUENCE [LARGE SCALE MRNA] OF 70-634 (ISOFORM 1)</scope>
    <source>
        <strain>C57BL/6J</strain>
        <tissue>Head</tissue>
        <tissue>Retina</tissue>
        <tissue>Skin</tissue>
        <tissue>Testis</tissue>
        <tissue>Thymus</tissue>
    </source>
</reference>
<reference key="2">
    <citation type="journal article" date="2004" name="Genome Res.">
        <title>The status, quality, and expansion of the NIH full-length cDNA project: the Mammalian Gene Collection (MGC).</title>
        <authorList>
            <consortium name="The MGC Project Team"/>
        </authorList>
    </citation>
    <scope>NUCLEOTIDE SEQUENCE [LARGE SCALE MRNA] (ISOFORM 1)</scope>
    <source>
        <tissue>Olfactory epithelium</tissue>
        <tissue>Testis</tissue>
    </source>
</reference>
<comment type="subcellular location">
    <subcellularLocation>
        <location evidence="1">Cytoplasm</location>
    </subcellularLocation>
</comment>
<comment type="alternative products">
    <event type="alternative splicing"/>
    <isoform>
        <id>Q5RL51-1</id>
        <name>1</name>
        <sequence type="displayed"/>
    </isoform>
    <isoform>
        <id>Q5RL51-2</id>
        <name>2</name>
        <sequence type="described" ref="VSP_030826 VSP_030827"/>
    </isoform>
    <isoform>
        <id>Q5RL51-3</id>
        <name>3</name>
        <sequence type="described" ref="VSP_030823"/>
    </isoform>
    <isoform>
        <id>Q5RL51-4</id>
        <name>4</name>
        <sequence type="described" ref="VSP_030824 VSP_030825"/>
    </isoform>
</comment>
<comment type="similarity">
    <text evidence="4">Belongs to the GSTCD family.</text>
</comment>
<organism>
    <name type="scientific">Mus musculus</name>
    <name type="common">Mouse</name>
    <dbReference type="NCBI Taxonomy" id="10090"/>
    <lineage>
        <taxon>Eukaryota</taxon>
        <taxon>Metazoa</taxon>
        <taxon>Chordata</taxon>
        <taxon>Craniata</taxon>
        <taxon>Vertebrata</taxon>
        <taxon>Euteleostomi</taxon>
        <taxon>Mammalia</taxon>
        <taxon>Eutheria</taxon>
        <taxon>Euarchontoglires</taxon>
        <taxon>Glires</taxon>
        <taxon>Rodentia</taxon>
        <taxon>Myomorpha</taxon>
        <taxon>Muroidea</taxon>
        <taxon>Muridae</taxon>
        <taxon>Murinae</taxon>
        <taxon>Mus</taxon>
        <taxon>Mus</taxon>
    </lineage>
</organism>
<feature type="chain" id="PRO_0000316954" description="Glutathione S-transferase C-terminal domain-containing protein">
    <location>
        <begin position="1"/>
        <end position="634"/>
    </location>
</feature>
<feature type="domain" description="GST C-terminal">
    <location>
        <begin position="131"/>
        <end position="333"/>
    </location>
</feature>
<feature type="region of interest" description="Disordered" evidence="2">
    <location>
        <begin position="189"/>
        <end position="233"/>
    </location>
</feature>
<feature type="compositionally biased region" description="Low complexity" evidence="2">
    <location>
        <begin position="204"/>
        <end position="226"/>
    </location>
</feature>
<feature type="splice variant" id="VSP_030823" description="In isoform 3." evidence="3">
    <location>
        <begin position="1"/>
        <end position="378"/>
    </location>
</feature>
<feature type="splice variant" id="VSP_030824" description="In isoform 4." evidence="3">
    <original>IICKKFSEKLEQFPLLTSWYQRIQEVPKVK</original>
    <variation>RMCLQSSCYYAFQFDKLLGFVFGSQQISCL</variation>
    <location>
        <begin position="301"/>
        <end position="330"/>
    </location>
</feature>
<feature type="splice variant" id="VSP_030825" description="In isoform 4." evidence="3">
    <location>
        <begin position="331"/>
        <end position="634"/>
    </location>
</feature>
<feature type="splice variant" id="VSP_030826" description="In isoform 2." evidence="3">
    <original>VALHACGVATDMVIEHCIQTRASFITCPCCY</original>
    <variation>PNRPTTDVQCRDDKMFERAVMCDTVLTFSPH</variation>
    <location>
        <begin position="512"/>
        <end position="542"/>
    </location>
</feature>
<feature type="splice variant" id="VSP_030827" description="In isoform 2." evidence="3">
    <location>
        <begin position="543"/>
        <end position="634"/>
    </location>
</feature>
<feature type="sequence conflict" description="In Ref. 2; AAH61240." evidence="4" ref="2">
    <original>R</original>
    <variation>I</variation>
    <location>
        <position position="198"/>
    </location>
</feature>
<feature type="sequence conflict" description="In Ref. 1; BAB29091." evidence="4" ref="1">
    <original>E</original>
    <variation>G</variation>
    <location>
        <position position="414"/>
    </location>
</feature>